<feature type="chain" id="PRO_1000198669" description="Pyrimidine/purine nucleoside phosphorylase">
    <location>
        <begin position="1"/>
        <end position="104"/>
    </location>
</feature>
<organism>
    <name type="scientific">Leptothrix cholodnii (strain ATCC 51168 / LMG 8142 / SP-6)</name>
    <name type="common">Leptothrix discophora (strain SP-6)</name>
    <dbReference type="NCBI Taxonomy" id="395495"/>
    <lineage>
        <taxon>Bacteria</taxon>
        <taxon>Pseudomonadati</taxon>
        <taxon>Pseudomonadota</taxon>
        <taxon>Betaproteobacteria</taxon>
        <taxon>Burkholderiales</taxon>
        <taxon>Sphaerotilaceae</taxon>
        <taxon>Leptothrix</taxon>
    </lineage>
</organism>
<gene>
    <name evidence="1" type="primary">ppnP</name>
    <name type="ordered locus">Lcho_0913</name>
</gene>
<keyword id="KW-0328">Glycosyltransferase</keyword>
<keyword id="KW-1185">Reference proteome</keyword>
<keyword id="KW-0808">Transferase</keyword>
<evidence type="ECO:0000255" key="1">
    <source>
        <dbReference type="HAMAP-Rule" id="MF_01537"/>
    </source>
</evidence>
<sequence length="104" mass="11035">MTDSIAATINTRANVYFDGKCVSHGITLADGTKKSVGVILPATLTFNTGAPEVMETVAGSCSIKLAGSDSWQSYGPGERFDVPGQSSFEIKVEGEPYHYICHFG</sequence>
<protein>
    <recommendedName>
        <fullName evidence="1">Pyrimidine/purine nucleoside phosphorylase</fullName>
        <ecNumber evidence="1">2.4.2.1</ecNumber>
        <ecNumber evidence="1">2.4.2.2</ecNumber>
    </recommendedName>
    <alternativeName>
        <fullName evidence="1">Adenosine phosphorylase</fullName>
    </alternativeName>
    <alternativeName>
        <fullName evidence="1">Cytidine phosphorylase</fullName>
    </alternativeName>
    <alternativeName>
        <fullName evidence="1">Guanosine phosphorylase</fullName>
    </alternativeName>
    <alternativeName>
        <fullName evidence="1">Inosine phosphorylase</fullName>
    </alternativeName>
    <alternativeName>
        <fullName evidence="1">Thymidine phosphorylase</fullName>
    </alternativeName>
    <alternativeName>
        <fullName evidence="1">Uridine phosphorylase</fullName>
    </alternativeName>
    <alternativeName>
        <fullName evidence="1">Xanthosine phosphorylase</fullName>
    </alternativeName>
</protein>
<accession>B1Y2G9</accession>
<dbReference type="EC" id="2.4.2.1" evidence="1"/>
<dbReference type="EC" id="2.4.2.2" evidence="1"/>
<dbReference type="EMBL" id="CP001013">
    <property type="protein sequence ID" value="ACB33185.1"/>
    <property type="molecule type" value="Genomic_DNA"/>
</dbReference>
<dbReference type="RefSeq" id="WP_012345947.1">
    <property type="nucleotide sequence ID" value="NC_010524.1"/>
</dbReference>
<dbReference type="SMR" id="B1Y2G9"/>
<dbReference type="STRING" id="395495.Lcho_0913"/>
<dbReference type="KEGG" id="lch:Lcho_0913"/>
<dbReference type="eggNOG" id="COG3123">
    <property type="taxonomic scope" value="Bacteria"/>
</dbReference>
<dbReference type="HOGENOM" id="CLU_157874_1_0_4"/>
<dbReference type="OrthoDB" id="9793848at2"/>
<dbReference type="Proteomes" id="UP000001693">
    <property type="component" value="Chromosome"/>
</dbReference>
<dbReference type="GO" id="GO:0005829">
    <property type="term" value="C:cytosol"/>
    <property type="evidence" value="ECO:0007669"/>
    <property type="project" value="TreeGrafter"/>
</dbReference>
<dbReference type="GO" id="GO:0047975">
    <property type="term" value="F:guanosine phosphorylase activity"/>
    <property type="evidence" value="ECO:0007669"/>
    <property type="project" value="UniProtKB-EC"/>
</dbReference>
<dbReference type="GO" id="GO:0004731">
    <property type="term" value="F:purine-nucleoside phosphorylase activity"/>
    <property type="evidence" value="ECO:0007669"/>
    <property type="project" value="UniProtKB-UniRule"/>
</dbReference>
<dbReference type="GO" id="GO:0009032">
    <property type="term" value="F:thymidine phosphorylase activity"/>
    <property type="evidence" value="ECO:0007669"/>
    <property type="project" value="UniProtKB-EC"/>
</dbReference>
<dbReference type="GO" id="GO:0004850">
    <property type="term" value="F:uridine phosphorylase activity"/>
    <property type="evidence" value="ECO:0007669"/>
    <property type="project" value="UniProtKB-EC"/>
</dbReference>
<dbReference type="CDD" id="cd20296">
    <property type="entry name" value="cupin_PpnP-like"/>
    <property type="match status" value="1"/>
</dbReference>
<dbReference type="Gene3D" id="2.60.120.10">
    <property type="entry name" value="Jelly Rolls"/>
    <property type="match status" value="1"/>
</dbReference>
<dbReference type="HAMAP" id="MF_01537">
    <property type="entry name" value="Nucleos_phosphorylase_PpnP"/>
    <property type="match status" value="1"/>
</dbReference>
<dbReference type="InterPro" id="IPR009664">
    <property type="entry name" value="Ppnp"/>
</dbReference>
<dbReference type="InterPro" id="IPR014710">
    <property type="entry name" value="RmlC-like_jellyroll"/>
</dbReference>
<dbReference type="InterPro" id="IPR011051">
    <property type="entry name" value="RmlC_Cupin_sf"/>
</dbReference>
<dbReference type="PANTHER" id="PTHR36540">
    <property type="entry name" value="PYRIMIDINE/PURINE NUCLEOSIDE PHOSPHORYLASE"/>
    <property type="match status" value="1"/>
</dbReference>
<dbReference type="PANTHER" id="PTHR36540:SF1">
    <property type="entry name" value="PYRIMIDINE_PURINE NUCLEOSIDE PHOSPHORYLASE"/>
    <property type="match status" value="1"/>
</dbReference>
<dbReference type="Pfam" id="PF06865">
    <property type="entry name" value="Ppnp"/>
    <property type="match status" value="1"/>
</dbReference>
<dbReference type="SUPFAM" id="SSF51182">
    <property type="entry name" value="RmlC-like cupins"/>
    <property type="match status" value="1"/>
</dbReference>
<proteinExistence type="inferred from homology"/>
<reference key="1">
    <citation type="submission" date="2008-03" db="EMBL/GenBank/DDBJ databases">
        <title>Complete sequence of Leptothrix cholodnii SP-6.</title>
        <authorList>
            <consortium name="US DOE Joint Genome Institute"/>
            <person name="Copeland A."/>
            <person name="Lucas S."/>
            <person name="Lapidus A."/>
            <person name="Glavina del Rio T."/>
            <person name="Dalin E."/>
            <person name="Tice H."/>
            <person name="Bruce D."/>
            <person name="Goodwin L."/>
            <person name="Pitluck S."/>
            <person name="Chertkov O."/>
            <person name="Brettin T."/>
            <person name="Detter J.C."/>
            <person name="Han C."/>
            <person name="Kuske C.R."/>
            <person name="Schmutz J."/>
            <person name="Larimer F."/>
            <person name="Land M."/>
            <person name="Hauser L."/>
            <person name="Kyrpides N."/>
            <person name="Lykidis A."/>
            <person name="Emerson D."/>
            <person name="Richardson P."/>
        </authorList>
    </citation>
    <scope>NUCLEOTIDE SEQUENCE [LARGE SCALE GENOMIC DNA]</scope>
    <source>
        <strain>ATCC 51168 / LMG 8142 / SP-6</strain>
    </source>
</reference>
<name>PPNP_LEPCP</name>
<comment type="function">
    <text evidence="1">Catalyzes the phosphorolysis of diverse nucleosides, yielding D-ribose 1-phosphate and the respective free bases. Can use uridine, adenosine, guanosine, cytidine, thymidine, inosine and xanthosine as substrates. Also catalyzes the reverse reactions.</text>
</comment>
<comment type="catalytic activity">
    <reaction evidence="1">
        <text>a purine D-ribonucleoside + phosphate = a purine nucleobase + alpha-D-ribose 1-phosphate</text>
        <dbReference type="Rhea" id="RHEA:19805"/>
        <dbReference type="ChEBI" id="CHEBI:26386"/>
        <dbReference type="ChEBI" id="CHEBI:43474"/>
        <dbReference type="ChEBI" id="CHEBI:57720"/>
        <dbReference type="ChEBI" id="CHEBI:142355"/>
        <dbReference type="EC" id="2.4.2.1"/>
    </reaction>
</comment>
<comment type="catalytic activity">
    <reaction evidence="1">
        <text>adenosine + phosphate = alpha-D-ribose 1-phosphate + adenine</text>
        <dbReference type="Rhea" id="RHEA:27642"/>
        <dbReference type="ChEBI" id="CHEBI:16335"/>
        <dbReference type="ChEBI" id="CHEBI:16708"/>
        <dbReference type="ChEBI" id="CHEBI:43474"/>
        <dbReference type="ChEBI" id="CHEBI:57720"/>
        <dbReference type="EC" id="2.4.2.1"/>
    </reaction>
</comment>
<comment type="catalytic activity">
    <reaction evidence="1">
        <text>cytidine + phosphate = cytosine + alpha-D-ribose 1-phosphate</text>
        <dbReference type="Rhea" id="RHEA:52540"/>
        <dbReference type="ChEBI" id="CHEBI:16040"/>
        <dbReference type="ChEBI" id="CHEBI:17562"/>
        <dbReference type="ChEBI" id="CHEBI:43474"/>
        <dbReference type="ChEBI" id="CHEBI:57720"/>
        <dbReference type="EC" id="2.4.2.2"/>
    </reaction>
</comment>
<comment type="catalytic activity">
    <reaction evidence="1">
        <text>guanosine + phosphate = alpha-D-ribose 1-phosphate + guanine</text>
        <dbReference type="Rhea" id="RHEA:13233"/>
        <dbReference type="ChEBI" id="CHEBI:16235"/>
        <dbReference type="ChEBI" id="CHEBI:16750"/>
        <dbReference type="ChEBI" id="CHEBI:43474"/>
        <dbReference type="ChEBI" id="CHEBI:57720"/>
        <dbReference type="EC" id="2.4.2.1"/>
    </reaction>
</comment>
<comment type="catalytic activity">
    <reaction evidence="1">
        <text>inosine + phosphate = alpha-D-ribose 1-phosphate + hypoxanthine</text>
        <dbReference type="Rhea" id="RHEA:27646"/>
        <dbReference type="ChEBI" id="CHEBI:17368"/>
        <dbReference type="ChEBI" id="CHEBI:17596"/>
        <dbReference type="ChEBI" id="CHEBI:43474"/>
        <dbReference type="ChEBI" id="CHEBI:57720"/>
        <dbReference type="EC" id="2.4.2.1"/>
    </reaction>
</comment>
<comment type="catalytic activity">
    <reaction evidence="1">
        <text>thymidine + phosphate = 2-deoxy-alpha-D-ribose 1-phosphate + thymine</text>
        <dbReference type="Rhea" id="RHEA:16037"/>
        <dbReference type="ChEBI" id="CHEBI:17748"/>
        <dbReference type="ChEBI" id="CHEBI:17821"/>
        <dbReference type="ChEBI" id="CHEBI:43474"/>
        <dbReference type="ChEBI" id="CHEBI:57259"/>
        <dbReference type="EC" id="2.4.2.2"/>
    </reaction>
</comment>
<comment type="catalytic activity">
    <reaction evidence="1">
        <text>uridine + phosphate = alpha-D-ribose 1-phosphate + uracil</text>
        <dbReference type="Rhea" id="RHEA:24388"/>
        <dbReference type="ChEBI" id="CHEBI:16704"/>
        <dbReference type="ChEBI" id="CHEBI:17568"/>
        <dbReference type="ChEBI" id="CHEBI:43474"/>
        <dbReference type="ChEBI" id="CHEBI:57720"/>
        <dbReference type="EC" id="2.4.2.2"/>
    </reaction>
</comment>
<comment type="catalytic activity">
    <reaction evidence="1">
        <text>xanthosine + phosphate = alpha-D-ribose 1-phosphate + xanthine</text>
        <dbReference type="Rhea" id="RHEA:27638"/>
        <dbReference type="ChEBI" id="CHEBI:17712"/>
        <dbReference type="ChEBI" id="CHEBI:18107"/>
        <dbReference type="ChEBI" id="CHEBI:43474"/>
        <dbReference type="ChEBI" id="CHEBI:57720"/>
        <dbReference type="EC" id="2.4.2.1"/>
    </reaction>
</comment>
<comment type="similarity">
    <text evidence="1">Belongs to the nucleoside phosphorylase PpnP family.</text>
</comment>